<gene>
    <name type="ordered locus">MIMI_L550</name>
</gene>
<keyword id="KW-1185">Reference proteome</keyword>
<keyword id="KW-0946">Virion</keyword>
<organismHost>
    <name type="scientific">Acanthamoeba polyphaga</name>
    <name type="common">Amoeba</name>
    <dbReference type="NCBI Taxonomy" id="5757"/>
</organismHost>
<organism>
    <name type="scientific">Acanthamoeba polyphaga mimivirus</name>
    <name type="common">APMV</name>
    <dbReference type="NCBI Taxonomy" id="212035"/>
    <lineage>
        <taxon>Viruses</taxon>
        <taxon>Varidnaviria</taxon>
        <taxon>Bamfordvirae</taxon>
        <taxon>Nucleocytoviricota</taxon>
        <taxon>Megaviricetes</taxon>
        <taxon>Imitervirales</taxon>
        <taxon>Mimiviridae</taxon>
        <taxon>Megamimivirinae</taxon>
        <taxon>Mimivirus</taxon>
        <taxon>Mimivirus bradfordmassiliense</taxon>
    </lineage>
</organism>
<sequence>MAYFGCGPCGGSAGYNNCYNNGYGNGYGSNHCRDGFGACQNNVSGRNREVYYEKDNCFNANNNNFYGGRENDSCGGWNAGCNNGNCGGWNSGGCGLPFYGGGCGIGGGCGIGGGCGPIGDCGPIGGGCGPIGGGCGPVGGWRKGYKGGYGGAPSSKLCRGLGYKKRN</sequence>
<proteinExistence type="evidence at protein level"/>
<accession>Q5UR27</accession>
<name>YL550_MIMIV</name>
<feature type="chain" id="PRO_0000071292" description="Uncharacterized protein L550">
    <location>
        <begin position="1"/>
        <end position="167"/>
    </location>
</feature>
<comment type="subcellular location">
    <subcellularLocation>
        <location evidence="1">Virion</location>
    </subcellularLocation>
</comment>
<dbReference type="EMBL" id="AY653733">
    <property type="protein sequence ID" value="AAV50814.1"/>
    <property type="molecule type" value="Genomic_DNA"/>
</dbReference>
<dbReference type="KEGG" id="vg:9925185"/>
<dbReference type="Proteomes" id="UP000001134">
    <property type="component" value="Genome"/>
</dbReference>
<dbReference type="GO" id="GO:0044423">
    <property type="term" value="C:virion component"/>
    <property type="evidence" value="ECO:0007669"/>
    <property type="project" value="UniProtKB-KW"/>
</dbReference>
<reference key="1">
    <citation type="journal article" date="2004" name="Science">
        <title>The 1.2-megabase genome sequence of Mimivirus.</title>
        <authorList>
            <person name="Raoult D."/>
            <person name="Audic S."/>
            <person name="Robert C."/>
            <person name="Abergel C."/>
            <person name="Renesto P."/>
            <person name="Ogata H."/>
            <person name="La Scola B."/>
            <person name="Susan M."/>
            <person name="Claverie J.-M."/>
        </authorList>
    </citation>
    <scope>NUCLEOTIDE SEQUENCE [LARGE SCALE GENOMIC DNA]</scope>
    <source>
        <strain>Rowbotham-Bradford</strain>
    </source>
</reference>
<reference key="2">
    <citation type="journal article" date="2006" name="J. Virol.">
        <title>Mimivirus giant particles incorporate a large fraction of anonymous and unique gene products.</title>
        <authorList>
            <person name="Renesto P."/>
            <person name="Abergel C."/>
            <person name="Decloquement P."/>
            <person name="Moinier D."/>
            <person name="Azza S."/>
            <person name="Ogata H."/>
            <person name="Fourquet P."/>
            <person name="Gorvel J.-P."/>
            <person name="Claverie J.-M."/>
            <person name="Raoult D."/>
        </authorList>
    </citation>
    <scope>IDENTIFICATION BY MASS SPECTROMETRY [LARGE SCALE ANALYSIS]</scope>
    <scope>SUBCELLULAR LOCATION</scope>
</reference>
<protein>
    <recommendedName>
        <fullName>Uncharacterized protein L550</fullName>
    </recommendedName>
</protein>
<evidence type="ECO:0000269" key="1">
    <source>
    </source>
</evidence>